<protein>
    <recommendedName>
        <fullName evidence="1">Flagellar P-ring protein</fullName>
    </recommendedName>
    <alternativeName>
        <fullName evidence="1">Basal body P-ring protein</fullName>
    </alternativeName>
</protein>
<name>FLGI_LEPIN</name>
<dbReference type="EMBL" id="AE010300">
    <property type="protein sequence ID" value="AAN49863.1"/>
    <property type="molecule type" value="Genomic_DNA"/>
</dbReference>
<dbReference type="RefSeq" id="NP_712845.1">
    <property type="nucleotide sequence ID" value="NC_004342.2"/>
</dbReference>
<dbReference type="RefSeq" id="WP_000838056.1">
    <property type="nucleotide sequence ID" value="NC_004342.2"/>
</dbReference>
<dbReference type="SMR" id="Q8F2V3"/>
<dbReference type="FunCoup" id="Q8F2V3">
    <property type="interactions" value="41"/>
</dbReference>
<dbReference type="STRING" id="189518.LA_2664"/>
<dbReference type="PaxDb" id="189518-LA_2664"/>
<dbReference type="EnsemblBacteria" id="AAN49863">
    <property type="protein sequence ID" value="AAN49863"/>
    <property type="gene ID" value="LA_2664"/>
</dbReference>
<dbReference type="KEGG" id="lil:LA_2664"/>
<dbReference type="PATRIC" id="fig|189518.3.peg.2645"/>
<dbReference type="HOGENOM" id="CLU_045235_1_0_12"/>
<dbReference type="InParanoid" id="Q8F2V3"/>
<dbReference type="OrthoDB" id="9786431at2"/>
<dbReference type="Proteomes" id="UP000001408">
    <property type="component" value="Chromosome I"/>
</dbReference>
<dbReference type="GO" id="GO:0009428">
    <property type="term" value="C:bacterial-type flagellum basal body, distal rod, P ring"/>
    <property type="evidence" value="ECO:0000318"/>
    <property type="project" value="GO_Central"/>
</dbReference>
<dbReference type="GO" id="GO:0030288">
    <property type="term" value="C:outer membrane-bounded periplasmic space"/>
    <property type="evidence" value="ECO:0007669"/>
    <property type="project" value="InterPro"/>
</dbReference>
<dbReference type="GO" id="GO:0005198">
    <property type="term" value="F:structural molecule activity"/>
    <property type="evidence" value="ECO:0007669"/>
    <property type="project" value="InterPro"/>
</dbReference>
<dbReference type="GO" id="GO:0071973">
    <property type="term" value="P:bacterial-type flagellum-dependent cell motility"/>
    <property type="evidence" value="ECO:0000318"/>
    <property type="project" value="GO_Central"/>
</dbReference>
<dbReference type="HAMAP" id="MF_00416">
    <property type="entry name" value="FlgI"/>
    <property type="match status" value="1"/>
</dbReference>
<dbReference type="InterPro" id="IPR001782">
    <property type="entry name" value="Flag_FlgI"/>
</dbReference>
<dbReference type="NCBIfam" id="NF003676">
    <property type="entry name" value="PRK05303.1"/>
    <property type="match status" value="1"/>
</dbReference>
<dbReference type="PANTHER" id="PTHR30381">
    <property type="entry name" value="FLAGELLAR P-RING PERIPLASMIC PROTEIN FLGI"/>
    <property type="match status" value="1"/>
</dbReference>
<dbReference type="PANTHER" id="PTHR30381:SF0">
    <property type="entry name" value="FLAGELLAR P-RING PROTEIN"/>
    <property type="match status" value="1"/>
</dbReference>
<dbReference type="Pfam" id="PF02119">
    <property type="entry name" value="FlgI"/>
    <property type="match status" value="1"/>
</dbReference>
<dbReference type="PRINTS" id="PR01010">
    <property type="entry name" value="FLGPRINGFLGI"/>
</dbReference>
<proteinExistence type="inferred from homology"/>
<organism>
    <name type="scientific">Leptospira interrogans serogroup Icterohaemorrhagiae serovar Lai (strain 56601)</name>
    <dbReference type="NCBI Taxonomy" id="189518"/>
    <lineage>
        <taxon>Bacteria</taxon>
        <taxon>Pseudomonadati</taxon>
        <taxon>Spirochaetota</taxon>
        <taxon>Spirochaetia</taxon>
        <taxon>Leptospirales</taxon>
        <taxon>Leptospiraceae</taxon>
        <taxon>Leptospira</taxon>
    </lineage>
</organism>
<comment type="function">
    <text evidence="1">Assembles around the rod to form the L-ring and probably protects the motor/basal body from shearing forces during rotation.</text>
</comment>
<comment type="subunit">
    <text evidence="1">The basal body constitutes a major portion of the flagellar organelle and consists of four rings (L,P,S, and M) mounted on a central rod.</text>
</comment>
<comment type="subcellular location">
    <subcellularLocation>
        <location evidence="1">Periplasm</location>
    </subcellularLocation>
    <subcellularLocation>
        <location evidence="1">Bacterial flagellum basal body</location>
    </subcellularLocation>
</comment>
<comment type="similarity">
    <text evidence="1">Belongs to the FlgI family.</text>
</comment>
<keyword id="KW-0975">Bacterial flagellum</keyword>
<keyword id="KW-0574">Periplasm</keyword>
<keyword id="KW-1185">Reference proteome</keyword>
<keyword id="KW-0732">Signal</keyword>
<sequence length="366" mass="39512">MKSKYSIFCMFLLRGFIFLGTVFSLNSAELRLKDIARIEGVRENQITGYGIVVGLPGTGDSKTPFTSESMKNYLKNLGVEANLKPDQTRNIASVLITATIPTYSRKGDKLNVVVSSIGDAKSLEGGVLLQSPLKTAGDKTYAVASGVISFGGRQEQERGSSSRGNKKTVGVVHGGAIVEQELDQNFYASERVQIQLENQDFTTLNAIVSKIRSILPGKHGIGPESVVPISPSEINIVLGKSFENKSDAFLTLLSDIENLTVETQTKPKVVINERTGVIVMGGNITIEEVAVSRSGLNLSVTDKNRRRNWLGKEQEPTKSSFLIEESTSVGDVVEALNKVGASTKDIIAILEALKKSGALHAELEIQ</sequence>
<accession>Q8F2V3</accession>
<evidence type="ECO:0000255" key="1">
    <source>
        <dbReference type="HAMAP-Rule" id="MF_00416"/>
    </source>
</evidence>
<feature type="signal peptide" evidence="1">
    <location>
        <begin position="1"/>
        <end position="27"/>
    </location>
</feature>
<feature type="chain" id="PRO_0000009510" description="Flagellar P-ring protein">
    <location>
        <begin position="28"/>
        <end position="366"/>
    </location>
</feature>
<reference key="1">
    <citation type="journal article" date="2003" name="Nature">
        <title>Unique physiological and pathogenic features of Leptospira interrogans revealed by whole-genome sequencing.</title>
        <authorList>
            <person name="Ren S.-X."/>
            <person name="Fu G."/>
            <person name="Jiang X.-G."/>
            <person name="Zeng R."/>
            <person name="Miao Y.-G."/>
            <person name="Xu H."/>
            <person name="Zhang Y.-X."/>
            <person name="Xiong H."/>
            <person name="Lu G."/>
            <person name="Lu L.-F."/>
            <person name="Jiang H.-Q."/>
            <person name="Jia J."/>
            <person name="Tu Y.-F."/>
            <person name="Jiang J.-X."/>
            <person name="Gu W.-Y."/>
            <person name="Zhang Y.-Q."/>
            <person name="Cai Z."/>
            <person name="Sheng H.-H."/>
            <person name="Yin H.-F."/>
            <person name="Zhang Y."/>
            <person name="Zhu G.-F."/>
            <person name="Wan M."/>
            <person name="Huang H.-L."/>
            <person name="Qian Z."/>
            <person name="Wang S.-Y."/>
            <person name="Ma W."/>
            <person name="Yao Z.-J."/>
            <person name="Shen Y."/>
            <person name="Qiang B.-Q."/>
            <person name="Xia Q.-C."/>
            <person name="Guo X.-K."/>
            <person name="Danchin A."/>
            <person name="Saint Girons I."/>
            <person name="Somerville R.L."/>
            <person name="Wen Y.-M."/>
            <person name="Shi M.-H."/>
            <person name="Chen Z."/>
            <person name="Xu J.-G."/>
            <person name="Zhao G.-P."/>
        </authorList>
    </citation>
    <scope>NUCLEOTIDE SEQUENCE [LARGE SCALE GENOMIC DNA]</scope>
    <source>
        <strain>56601</strain>
    </source>
</reference>
<gene>
    <name evidence="1" type="primary">flgI</name>
    <name type="ordered locus">LA_2664</name>
</gene>